<protein>
    <recommendedName>
        <fullName evidence="1">L-ribulose-5-phosphate 4-epimerase UlaF</fullName>
        <ecNumber evidence="1">5.1.3.4</ecNumber>
    </recommendedName>
    <alternativeName>
        <fullName evidence="1">L-ascorbate utilization protein F</fullName>
    </alternativeName>
    <alternativeName>
        <fullName evidence="1">Phosphoribulose isomerase</fullName>
    </alternativeName>
</protein>
<evidence type="ECO:0000255" key="1">
    <source>
        <dbReference type="HAMAP-Rule" id="MF_01952"/>
    </source>
</evidence>
<proteinExistence type="inferred from homology"/>
<reference key="1">
    <citation type="journal article" date="2009" name="PLoS Genet.">
        <title>Organised genome dynamics in the Escherichia coli species results in highly diverse adaptive paths.</title>
        <authorList>
            <person name="Touchon M."/>
            <person name="Hoede C."/>
            <person name="Tenaillon O."/>
            <person name="Barbe V."/>
            <person name="Baeriswyl S."/>
            <person name="Bidet P."/>
            <person name="Bingen E."/>
            <person name="Bonacorsi S."/>
            <person name="Bouchier C."/>
            <person name="Bouvet O."/>
            <person name="Calteau A."/>
            <person name="Chiapello H."/>
            <person name="Clermont O."/>
            <person name="Cruveiller S."/>
            <person name="Danchin A."/>
            <person name="Diard M."/>
            <person name="Dossat C."/>
            <person name="Karoui M.E."/>
            <person name="Frapy E."/>
            <person name="Garry L."/>
            <person name="Ghigo J.M."/>
            <person name="Gilles A.M."/>
            <person name="Johnson J."/>
            <person name="Le Bouguenec C."/>
            <person name="Lescat M."/>
            <person name="Mangenot S."/>
            <person name="Martinez-Jehanne V."/>
            <person name="Matic I."/>
            <person name="Nassif X."/>
            <person name="Oztas S."/>
            <person name="Petit M.A."/>
            <person name="Pichon C."/>
            <person name="Rouy Z."/>
            <person name="Ruf C.S."/>
            <person name="Schneider D."/>
            <person name="Tourret J."/>
            <person name="Vacherie B."/>
            <person name="Vallenet D."/>
            <person name="Medigue C."/>
            <person name="Rocha E.P.C."/>
            <person name="Denamur E."/>
        </authorList>
    </citation>
    <scope>NUCLEOTIDE SEQUENCE [LARGE SCALE GENOMIC DNA]</scope>
    <source>
        <strain>ATCC 35469 / DSM 13698 / BCRC 15582 / CCUG 18766 / IAM 14443 / JCM 21226 / LMG 7866 / NBRC 102419 / NCTC 12128 / CDC 0568-73</strain>
    </source>
</reference>
<feature type="chain" id="PRO_1000188850" description="L-ribulose-5-phosphate 4-epimerase UlaF">
    <location>
        <begin position="1"/>
        <end position="228"/>
    </location>
</feature>
<feature type="active site" description="Proton donor/acceptor" evidence="1">
    <location>
        <position position="118"/>
    </location>
</feature>
<feature type="active site" description="Proton donor/acceptor" evidence="1">
    <location>
        <position position="225"/>
    </location>
</feature>
<feature type="binding site" evidence="1">
    <location>
        <begin position="26"/>
        <end position="27"/>
    </location>
    <ligand>
        <name>substrate</name>
    </ligand>
</feature>
<feature type="binding site" evidence="1">
    <location>
        <begin position="43"/>
        <end position="44"/>
    </location>
    <ligand>
        <name>substrate</name>
    </ligand>
</feature>
<feature type="binding site" evidence="1">
    <location>
        <begin position="72"/>
        <end position="73"/>
    </location>
    <ligand>
        <name>substrate</name>
    </ligand>
</feature>
<feature type="binding site" evidence="1">
    <location>
        <position position="74"/>
    </location>
    <ligand>
        <name>Zn(2+)</name>
        <dbReference type="ChEBI" id="CHEBI:29105"/>
    </ligand>
</feature>
<feature type="binding site" evidence="1">
    <location>
        <position position="93"/>
    </location>
    <ligand>
        <name>Zn(2+)</name>
        <dbReference type="ChEBI" id="CHEBI:29105"/>
    </ligand>
</feature>
<feature type="binding site" evidence="1">
    <location>
        <position position="95"/>
    </location>
    <ligand>
        <name>Zn(2+)</name>
        <dbReference type="ChEBI" id="CHEBI:29105"/>
    </ligand>
</feature>
<feature type="binding site" evidence="1">
    <location>
        <position position="167"/>
    </location>
    <ligand>
        <name>Zn(2+)</name>
        <dbReference type="ChEBI" id="CHEBI:29105"/>
    </ligand>
</feature>
<gene>
    <name evidence="1" type="primary">ulaF</name>
    <name type="ordered locus">EFER_4251</name>
</gene>
<name>ULAF_ESCF3</name>
<comment type="function">
    <text evidence="1">Catalyzes the isomerization of L-ribulose 5-phosphate to D-xylulose 5-phosphate. Is involved in the anaerobic L-ascorbate utilization.</text>
</comment>
<comment type="catalytic activity">
    <reaction evidence="1">
        <text>L-ribulose 5-phosphate = D-xylulose 5-phosphate</text>
        <dbReference type="Rhea" id="RHEA:22368"/>
        <dbReference type="ChEBI" id="CHEBI:57737"/>
        <dbReference type="ChEBI" id="CHEBI:58226"/>
        <dbReference type="EC" id="5.1.3.4"/>
    </reaction>
</comment>
<comment type="cofactor">
    <cofactor evidence="1">
        <name>Zn(2+)</name>
        <dbReference type="ChEBI" id="CHEBI:29105"/>
    </cofactor>
    <text evidence="1">Binds 1 zinc ion per subunit.</text>
</comment>
<comment type="pathway">
    <text evidence="1">Cofactor degradation; L-ascorbate degradation; D-xylulose 5-phosphate from L-ascorbate: step 4/4.</text>
</comment>
<comment type="induction">
    <text evidence="1">Induced by L-ascorbate. Repressed by UlaR.</text>
</comment>
<comment type="similarity">
    <text evidence="1">Belongs to the aldolase class II family. AraD/FucA subfamily.</text>
</comment>
<dbReference type="EC" id="5.1.3.4" evidence="1"/>
<dbReference type="EMBL" id="CU928158">
    <property type="protein sequence ID" value="CAQ91670.1"/>
    <property type="molecule type" value="Genomic_DNA"/>
</dbReference>
<dbReference type="RefSeq" id="WP_001170786.1">
    <property type="nucleotide sequence ID" value="NC_011740.1"/>
</dbReference>
<dbReference type="SMR" id="B7LLY0"/>
<dbReference type="GeneID" id="75059161"/>
<dbReference type="KEGG" id="efe:EFER_4251"/>
<dbReference type="HOGENOM" id="CLU_006033_5_0_6"/>
<dbReference type="OrthoDB" id="9786287at2"/>
<dbReference type="UniPathway" id="UPA00263">
    <property type="reaction ID" value="UER00380"/>
</dbReference>
<dbReference type="Proteomes" id="UP000000745">
    <property type="component" value="Chromosome"/>
</dbReference>
<dbReference type="GO" id="GO:0005829">
    <property type="term" value="C:cytosol"/>
    <property type="evidence" value="ECO:0007669"/>
    <property type="project" value="TreeGrafter"/>
</dbReference>
<dbReference type="GO" id="GO:0016832">
    <property type="term" value="F:aldehyde-lyase activity"/>
    <property type="evidence" value="ECO:0007669"/>
    <property type="project" value="TreeGrafter"/>
</dbReference>
<dbReference type="GO" id="GO:0008742">
    <property type="term" value="F:L-ribulose-phosphate 4-epimerase activity"/>
    <property type="evidence" value="ECO:0007669"/>
    <property type="project" value="UniProtKB-UniRule"/>
</dbReference>
<dbReference type="GO" id="GO:0008270">
    <property type="term" value="F:zinc ion binding"/>
    <property type="evidence" value="ECO:0007669"/>
    <property type="project" value="UniProtKB-UniRule"/>
</dbReference>
<dbReference type="GO" id="GO:0019854">
    <property type="term" value="P:L-ascorbic acid catabolic process"/>
    <property type="evidence" value="ECO:0007669"/>
    <property type="project" value="UniProtKB-UniRule"/>
</dbReference>
<dbReference type="GO" id="GO:0019323">
    <property type="term" value="P:pentose catabolic process"/>
    <property type="evidence" value="ECO:0007669"/>
    <property type="project" value="TreeGrafter"/>
</dbReference>
<dbReference type="CDD" id="cd00398">
    <property type="entry name" value="Aldolase_II"/>
    <property type="match status" value="1"/>
</dbReference>
<dbReference type="FunFam" id="3.40.225.10:FF:000001">
    <property type="entry name" value="L-ribulose-5-phosphate 4-epimerase UlaF"/>
    <property type="match status" value="1"/>
</dbReference>
<dbReference type="Gene3D" id="3.40.225.10">
    <property type="entry name" value="Class II aldolase/adducin N-terminal domain"/>
    <property type="match status" value="1"/>
</dbReference>
<dbReference type="HAMAP" id="MF_01952">
    <property type="entry name" value="UlaF"/>
    <property type="match status" value="1"/>
</dbReference>
<dbReference type="InterPro" id="IPR050197">
    <property type="entry name" value="Aldolase_class_II_sugar_metab"/>
</dbReference>
<dbReference type="InterPro" id="IPR001303">
    <property type="entry name" value="Aldolase_II/adducin_N"/>
</dbReference>
<dbReference type="InterPro" id="IPR036409">
    <property type="entry name" value="Aldolase_II/adducin_N_sf"/>
</dbReference>
<dbReference type="InterPro" id="IPR023499">
    <property type="entry name" value="UlaF"/>
</dbReference>
<dbReference type="NCBIfam" id="NF006047">
    <property type="entry name" value="PRK08193.1"/>
    <property type="match status" value="1"/>
</dbReference>
<dbReference type="NCBIfam" id="NF009003">
    <property type="entry name" value="PRK12348.1"/>
    <property type="match status" value="1"/>
</dbReference>
<dbReference type="PANTHER" id="PTHR22789">
    <property type="entry name" value="FUCULOSE PHOSPHATE ALDOLASE"/>
    <property type="match status" value="1"/>
</dbReference>
<dbReference type="PANTHER" id="PTHR22789:SF9">
    <property type="entry name" value="L-RIBULOSE-5-PHOSPHATE 4-EPIMERASE ULAF"/>
    <property type="match status" value="1"/>
</dbReference>
<dbReference type="Pfam" id="PF00596">
    <property type="entry name" value="Aldolase_II"/>
    <property type="match status" value="1"/>
</dbReference>
<dbReference type="SMART" id="SM01007">
    <property type="entry name" value="Aldolase_II"/>
    <property type="match status" value="1"/>
</dbReference>
<dbReference type="SUPFAM" id="SSF53639">
    <property type="entry name" value="AraD/HMP-PK domain-like"/>
    <property type="match status" value="1"/>
</dbReference>
<keyword id="KW-0119">Carbohydrate metabolism</keyword>
<keyword id="KW-0413">Isomerase</keyword>
<keyword id="KW-0479">Metal-binding</keyword>
<keyword id="KW-0862">Zinc</keyword>
<accession>B7LLY0</accession>
<organism>
    <name type="scientific">Escherichia fergusonii (strain ATCC 35469 / DSM 13698 / CCUG 18766 / IAM 14443 / JCM 21226 / LMG 7866 / NBRC 102419 / NCTC 12128 / CDC 0568-73)</name>
    <dbReference type="NCBI Taxonomy" id="585054"/>
    <lineage>
        <taxon>Bacteria</taxon>
        <taxon>Pseudomonadati</taxon>
        <taxon>Pseudomonadota</taxon>
        <taxon>Gammaproteobacteria</taxon>
        <taxon>Enterobacterales</taxon>
        <taxon>Enterobacteriaceae</taxon>
        <taxon>Escherichia</taxon>
    </lineage>
</organism>
<sequence length="228" mass="25324">MQKLKQQVFEANMDLPRYGLVTFTWGNVSAIDRERGLVVIKPSGIAYESMKANDMVVVDMSGKVVEGEYRPSSDTATHLELYRRYPSLGGIVHTHSTHATAWAQAGLAIPALGTTHADYFFGDIPCTRGLSEEEVQGEYELNTGKVIIETLGDAEPLHTPGIVVYQHGPFAWGKDAHDAVHNAVVMEEVAKMAWIARGINPQLNHIDSYLMNKHFMRKHGPNAYYGQK</sequence>